<reference key="1">
    <citation type="journal article" date="2004" name="Nature">
        <title>Genome sequence of the Brown Norway rat yields insights into mammalian evolution.</title>
        <authorList>
            <person name="Gibbs R.A."/>
            <person name="Weinstock G.M."/>
            <person name="Metzker M.L."/>
            <person name="Muzny D.M."/>
            <person name="Sodergren E.J."/>
            <person name="Scherer S."/>
            <person name="Scott G."/>
            <person name="Steffen D."/>
            <person name="Worley K.C."/>
            <person name="Burch P.E."/>
            <person name="Okwuonu G."/>
            <person name="Hines S."/>
            <person name="Lewis L."/>
            <person name="Deramo C."/>
            <person name="Delgado O."/>
            <person name="Dugan-Rocha S."/>
            <person name="Miner G."/>
            <person name="Morgan M."/>
            <person name="Hawes A."/>
            <person name="Gill R."/>
            <person name="Holt R.A."/>
            <person name="Adams M.D."/>
            <person name="Amanatides P.G."/>
            <person name="Baden-Tillson H."/>
            <person name="Barnstead M."/>
            <person name="Chin S."/>
            <person name="Evans C.A."/>
            <person name="Ferriera S."/>
            <person name="Fosler C."/>
            <person name="Glodek A."/>
            <person name="Gu Z."/>
            <person name="Jennings D."/>
            <person name="Kraft C.L."/>
            <person name="Nguyen T."/>
            <person name="Pfannkoch C.M."/>
            <person name="Sitter C."/>
            <person name="Sutton G.G."/>
            <person name="Venter J.C."/>
            <person name="Woodage T."/>
            <person name="Smith D."/>
            <person name="Lee H.-M."/>
            <person name="Gustafson E."/>
            <person name="Cahill P."/>
            <person name="Kana A."/>
            <person name="Doucette-Stamm L."/>
            <person name="Weinstock K."/>
            <person name="Fechtel K."/>
            <person name="Weiss R.B."/>
            <person name="Dunn D.M."/>
            <person name="Green E.D."/>
            <person name="Blakesley R.W."/>
            <person name="Bouffard G.G."/>
            <person name="De Jong P.J."/>
            <person name="Osoegawa K."/>
            <person name="Zhu B."/>
            <person name="Marra M."/>
            <person name="Schein J."/>
            <person name="Bosdet I."/>
            <person name="Fjell C."/>
            <person name="Jones S."/>
            <person name="Krzywinski M."/>
            <person name="Mathewson C."/>
            <person name="Siddiqui A."/>
            <person name="Wye N."/>
            <person name="McPherson J."/>
            <person name="Zhao S."/>
            <person name="Fraser C.M."/>
            <person name="Shetty J."/>
            <person name="Shatsman S."/>
            <person name="Geer K."/>
            <person name="Chen Y."/>
            <person name="Abramzon S."/>
            <person name="Nierman W.C."/>
            <person name="Havlak P.H."/>
            <person name="Chen R."/>
            <person name="Durbin K.J."/>
            <person name="Egan A."/>
            <person name="Ren Y."/>
            <person name="Song X.-Z."/>
            <person name="Li B."/>
            <person name="Liu Y."/>
            <person name="Qin X."/>
            <person name="Cawley S."/>
            <person name="Cooney A.J."/>
            <person name="D'Souza L.M."/>
            <person name="Martin K."/>
            <person name="Wu J.Q."/>
            <person name="Gonzalez-Garay M.L."/>
            <person name="Jackson A.R."/>
            <person name="Kalafus K.J."/>
            <person name="McLeod M.P."/>
            <person name="Milosavljevic A."/>
            <person name="Virk D."/>
            <person name="Volkov A."/>
            <person name="Wheeler D.A."/>
            <person name="Zhang Z."/>
            <person name="Bailey J.A."/>
            <person name="Eichler E.E."/>
            <person name="Tuzun E."/>
            <person name="Birney E."/>
            <person name="Mongin E."/>
            <person name="Ureta-Vidal A."/>
            <person name="Woodwark C."/>
            <person name="Zdobnov E."/>
            <person name="Bork P."/>
            <person name="Suyama M."/>
            <person name="Torrents D."/>
            <person name="Alexandersson M."/>
            <person name="Trask B.J."/>
            <person name="Young J.M."/>
            <person name="Huang H."/>
            <person name="Wang H."/>
            <person name="Xing H."/>
            <person name="Daniels S."/>
            <person name="Gietzen D."/>
            <person name="Schmidt J."/>
            <person name="Stevens K."/>
            <person name="Vitt U."/>
            <person name="Wingrove J."/>
            <person name="Camara F."/>
            <person name="Mar Alba M."/>
            <person name="Abril J.F."/>
            <person name="Guigo R."/>
            <person name="Smit A."/>
            <person name="Dubchak I."/>
            <person name="Rubin E.M."/>
            <person name="Couronne O."/>
            <person name="Poliakov A."/>
            <person name="Huebner N."/>
            <person name="Ganten D."/>
            <person name="Goesele C."/>
            <person name="Hummel O."/>
            <person name="Kreitler T."/>
            <person name="Lee Y.-A."/>
            <person name="Monti J."/>
            <person name="Schulz H."/>
            <person name="Zimdahl H."/>
            <person name="Himmelbauer H."/>
            <person name="Lehrach H."/>
            <person name="Jacob H.J."/>
            <person name="Bromberg S."/>
            <person name="Gullings-Handley J."/>
            <person name="Jensen-Seaman M.I."/>
            <person name="Kwitek A.E."/>
            <person name="Lazar J."/>
            <person name="Pasko D."/>
            <person name="Tonellato P.J."/>
            <person name="Twigger S."/>
            <person name="Ponting C.P."/>
            <person name="Duarte J.M."/>
            <person name="Rice S."/>
            <person name="Goodstadt L."/>
            <person name="Beatson S.A."/>
            <person name="Emes R.D."/>
            <person name="Winter E.E."/>
            <person name="Webber C."/>
            <person name="Brandt P."/>
            <person name="Nyakatura G."/>
            <person name="Adetobi M."/>
            <person name="Chiaromonte F."/>
            <person name="Elnitski L."/>
            <person name="Eswara P."/>
            <person name="Hardison R.C."/>
            <person name="Hou M."/>
            <person name="Kolbe D."/>
            <person name="Makova K."/>
            <person name="Miller W."/>
            <person name="Nekrutenko A."/>
            <person name="Riemer C."/>
            <person name="Schwartz S."/>
            <person name="Taylor J."/>
            <person name="Yang S."/>
            <person name="Zhang Y."/>
            <person name="Lindpaintner K."/>
            <person name="Andrews T.D."/>
            <person name="Caccamo M."/>
            <person name="Clamp M."/>
            <person name="Clarke L."/>
            <person name="Curwen V."/>
            <person name="Durbin R.M."/>
            <person name="Eyras E."/>
            <person name="Searle S.M."/>
            <person name="Cooper G.M."/>
            <person name="Batzoglou S."/>
            <person name="Brudno M."/>
            <person name="Sidow A."/>
            <person name="Stone E.A."/>
            <person name="Payseur B.A."/>
            <person name="Bourque G."/>
            <person name="Lopez-Otin C."/>
            <person name="Puente X.S."/>
            <person name="Chakrabarti K."/>
            <person name="Chatterji S."/>
            <person name="Dewey C."/>
            <person name="Pachter L."/>
            <person name="Bray N."/>
            <person name="Yap V.B."/>
            <person name="Caspi A."/>
            <person name="Tesler G."/>
            <person name="Pevzner P.A."/>
            <person name="Haussler D."/>
            <person name="Roskin K.M."/>
            <person name="Baertsch R."/>
            <person name="Clawson H."/>
            <person name="Furey T.S."/>
            <person name="Hinrichs A.S."/>
            <person name="Karolchik D."/>
            <person name="Kent W.J."/>
            <person name="Rosenbloom K.R."/>
            <person name="Trumbower H."/>
            <person name="Weirauch M."/>
            <person name="Cooper D.N."/>
            <person name="Stenson P.D."/>
            <person name="Ma B."/>
            <person name="Brent M."/>
            <person name="Arumugam M."/>
            <person name="Shteynberg D."/>
            <person name="Copley R.R."/>
            <person name="Taylor M.S."/>
            <person name="Riethman H."/>
            <person name="Mudunuri U."/>
            <person name="Peterson J."/>
            <person name="Guyer M."/>
            <person name="Felsenfeld A."/>
            <person name="Old S."/>
            <person name="Mockrin S."/>
            <person name="Collins F.S."/>
        </authorList>
    </citation>
    <scope>NUCLEOTIDE SEQUENCE [LARGE SCALE GENOMIC DNA]</scope>
    <source>
        <strain>Brown Norway</strain>
    </source>
</reference>
<reference key="2">
    <citation type="submission" date="2003-05" db="EMBL/GenBank/DDBJ databases">
        <title>Liver regeneration after PH.</title>
        <authorList>
            <person name="Xu C.S."/>
            <person name="Li W.Q."/>
            <person name="Li Y.C."/>
            <person name="Han H.P."/>
            <person name="Wang G.P."/>
            <person name="Chai L.Q."/>
            <person name="Yuan J.Y."/>
            <person name="Yang K.J."/>
            <person name="Yan H.M."/>
            <person name="Chang C.F."/>
            <person name="Zhao L.F."/>
            <person name="Ma H."/>
            <person name="Wang L."/>
            <person name="Wang S.F."/>
            <person name="Shi J.B."/>
            <person name="Rahman S."/>
            <person name="Wang Q.N."/>
            <person name="Zhang J.B."/>
        </authorList>
    </citation>
    <scope>NUCLEOTIDE SEQUENCE [LARGE SCALE MRNA]</scope>
    <source>
        <strain>Sprague-Dawley</strain>
    </source>
</reference>
<gene>
    <name type="primary">Fyttd1</name>
    <name type="synonym">Uif</name>
    <name type="ORF">Ac1176</name>
</gene>
<protein>
    <recommendedName>
        <fullName>UAP56-interacting factor</fullName>
    </recommendedName>
    <alternativeName>
        <fullName>Forty-two-three domain-containing protein 1</fullName>
        <shortName>Protein 40-2-3</shortName>
    </alternativeName>
</protein>
<feature type="chain" id="PRO_0000390995" description="UAP56-interacting factor">
    <location>
        <begin position="1"/>
        <end position="317"/>
    </location>
</feature>
<feature type="region of interest" description="Disordered" evidence="4">
    <location>
        <begin position="1"/>
        <end position="23"/>
    </location>
</feature>
<feature type="short sequence motif" description="UAP56-binding motif">
    <location>
        <begin position="26"/>
        <end position="44"/>
    </location>
</feature>
<feature type="modified residue" description="N-acetylmethionine" evidence="3">
    <location>
        <position position="1"/>
    </location>
</feature>
<feature type="modified residue" description="Phosphothreonine" evidence="2">
    <location>
        <position position="14"/>
    </location>
</feature>
<feature type="modified residue" description="Phosphoserine" evidence="3">
    <location>
        <position position="23"/>
    </location>
</feature>
<feature type="modified residue" description="Phosphoserine" evidence="3">
    <location>
        <position position="60"/>
    </location>
</feature>
<feature type="modified residue" description="Phosphoserine" evidence="3">
    <location>
        <position position="117"/>
    </location>
</feature>
<feature type="cross-link" description="Glycyl lysine isopeptide (Lys-Gly) (interchain with G-Cter in SUMO1)" evidence="3">
    <location>
        <position position="139"/>
    </location>
</feature>
<feature type="cross-link" description="Glycyl lysine isopeptide (Lys-Gly) (interchain with G-Cter in SUMO2)" evidence="3">
    <location>
        <position position="260"/>
    </location>
</feature>
<accession>Q7TQ84</accession>
<name>UIF_RAT</name>
<keyword id="KW-0007">Acetylation</keyword>
<keyword id="KW-1017">Isopeptide bond</keyword>
<keyword id="KW-0509">mRNA transport</keyword>
<keyword id="KW-0539">Nucleus</keyword>
<keyword id="KW-0597">Phosphoprotein</keyword>
<keyword id="KW-1185">Reference proteome</keyword>
<keyword id="KW-0694">RNA-binding</keyword>
<keyword id="KW-0813">Transport</keyword>
<keyword id="KW-0832">Ubl conjugation</keyword>
<sequence>MNRFGTRLVGATATTPPAPKARSNENLDKIDMSLDEIIKLNRKEGKKQSFPRLNRRLQQSGARQLRMRVRWGVQQSSGFGKTSVSRRGRVLPGKRRPYGVITGLAARKATGIRKGISPMNRPPLSDKNIERYFPALKRKTSLLRQNEVQRKPVAVLKRPNQLNRKNNIPANFTRSGNKLSHQKDTRQATFLFRRGLKVQTQLNTEQLIDDVVAKRTRQWRTSTTNGGILTVSIDNPGAVQCPVTQKPRLTRTAVPSFLTKREQSDVKKIPKGVPLQFDINSVGKQTGMTLNERFGILKEQRAALPFSKGGSRFVTVG</sequence>
<proteinExistence type="evidence at transcript level"/>
<comment type="function">
    <text evidence="1">Required for mRNA export from the nucleus to the cytoplasm. Acts as an adapter that uses the DDX39B/UAP56-NFX1 pathway to ensure efficient mRNA export and delivering to the nuclear pore. Associates with spliced and unspliced mRNAs simultaneously with ALYREF/THOC4 (By similarity).</text>
</comment>
<comment type="subunit">
    <text evidence="1">Interacts with DDX39B/UAP56 and NXF1; interaction with DDX39B/UAP56 and NXF1 are mutually exclusive. Interacts with SSRP1; required for its recruitment to mRNAs. Interacts with CHTOP (By similarity).</text>
</comment>
<comment type="subcellular location">
    <subcellularLocation>
        <location evidence="1">Nucleus</location>
        <location evidence="1">Nucleoplasm</location>
    </subcellularLocation>
    <subcellularLocation>
        <location evidence="1">Nucleus speckle</location>
    </subcellularLocation>
</comment>
<comment type="similarity">
    <text evidence="5">Belongs to the UIF family.</text>
</comment>
<comment type="sequence caution" evidence="5">
    <conflict type="miscellaneous discrepancy">
        <sequence resource="EMBL-CDS" id="AAP78754"/>
    </conflict>
    <text>Contaminating sequence. Sequence of unknown origin in the N-terminal part.</text>
</comment>
<organism>
    <name type="scientific">Rattus norvegicus</name>
    <name type="common">Rat</name>
    <dbReference type="NCBI Taxonomy" id="10116"/>
    <lineage>
        <taxon>Eukaryota</taxon>
        <taxon>Metazoa</taxon>
        <taxon>Chordata</taxon>
        <taxon>Craniata</taxon>
        <taxon>Vertebrata</taxon>
        <taxon>Euteleostomi</taxon>
        <taxon>Mammalia</taxon>
        <taxon>Eutheria</taxon>
        <taxon>Euarchontoglires</taxon>
        <taxon>Glires</taxon>
        <taxon>Rodentia</taxon>
        <taxon>Myomorpha</taxon>
        <taxon>Muroidea</taxon>
        <taxon>Muridae</taxon>
        <taxon>Murinae</taxon>
        <taxon>Rattus</taxon>
    </lineage>
</organism>
<dbReference type="EMBL" id="AABR03078527">
    <property type="status" value="NOT_ANNOTATED_CDS"/>
    <property type="molecule type" value="Genomic_DNA"/>
</dbReference>
<dbReference type="EMBL" id="AY310146">
    <property type="protein sequence ID" value="AAP78754.1"/>
    <property type="status" value="ALT_SEQ"/>
    <property type="molecule type" value="mRNA"/>
</dbReference>
<dbReference type="RefSeq" id="NP_001041364.1">
    <property type="nucleotide sequence ID" value="NM_001047899.2"/>
</dbReference>
<dbReference type="RefSeq" id="NP_001386212.1">
    <property type="nucleotide sequence ID" value="NM_001399283.1"/>
</dbReference>
<dbReference type="FunCoup" id="Q7TQ84">
    <property type="interactions" value="2195"/>
</dbReference>
<dbReference type="STRING" id="10116.ENSRNOP00000044272"/>
<dbReference type="GlyGen" id="Q7TQ84">
    <property type="glycosylation" value="1 site"/>
</dbReference>
<dbReference type="PhosphoSitePlus" id="Q7TQ84"/>
<dbReference type="PaxDb" id="10116-ENSRNOP00000044272"/>
<dbReference type="GeneID" id="360726"/>
<dbReference type="UCSC" id="RGD:1306899">
    <property type="organism name" value="rat"/>
</dbReference>
<dbReference type="AGR" id="RGD:1306899"/>
<dbReference type="RGD" id="1306899">
    <property type="gene designation" value="Fyttd1"/>
</dbReference>
<dbReference type="eggNOG" id="ENOG502QWD4">
    <property type="taxonomic scope" value="Eukaryota"/>
</dbReference>
<dbReference type="InParanoid" id="Q7TQ84"/>
<dbReference type="OrthoDB" id="9938627at2759"/>
<dbReference type="PhylomeDB" id="Q7TQ84"/>
<dbReference type="Reactome" id="R-RNO-159236">
    <property type="pathway name" value="Transport of Mature mRNA derived from an Intron-Containing Transcript"/>
</dbReference>
<dbReference type="Reactome" id="R-RNO-72187">
    <property type="pathway name" value="mRNA 3'-end processing"/>
</dbReference>
<dbReference type="Reactome" id="R-RNO-73856">
    <property type="pathway name" value="RNA Polymerase II Transcription Termination"/>
</dbReference>
<dbReference type="PRO" id="PR:Q7TQ84"/>
<dbReference type="Proteomes" id="UP000002494">
    <property type="component" value="Unplaced"/>
</dbReference>
<dbReference type="GO" id="GO:0016607">
    <property type="term" value="C:nuclear speck"/>
    <property type="evidence" value="ECO:0000250"/>
    <property type="project" value="UniProtKB"/>
</dbReference>
<dbReference type="GO" id="GO:0005654">
    <property type="term" value="C:nucleoplasm"/>
    <property type="evidence" value="ECO:0000250"/>
    <property type="project" value="UniProtKB"/>
</dbReference>
<dbReference type="GO" id="GO:0003729">
    <property type="term" value="F:mRNA binding"/>
    <property type="evidence" value="ECO:0000250"/>
    <property type="project" value="UniProtKB"/>
</dbReference>
<dbReference type="GO" id="GO:0006406">
    <property type="term" value="P:mRNA export from nucleus"/>
    <property type="evidence" value="ECO:0000250"/>
    <property type="project" value="UniProtKB"/>
</dbReference>
<dbReference type="InterPro" id="IPR009782">
    <property type="entry name" value="FYTTD1"/>
</dbReference>
<dbReference type="PANTHER" id="PTHR21038">
    <property type="entry name" value="40-2-3 PROTEIN-RELATED"/>
    <property type="match status" value="1"/>
</dbReference>
<dbReference type="PANTHER" id="PTHR21038:SF2">
    <property type="entry name" value="UAP56-INTERACTING FACTOR"/>
    <property type="match status" value="1"/>
</dbReference>
<dbReference type="Pfam" id="PF07078">
    <property type="entry name" value="FYTT"/>
    <property type="match status" value="1"/>
</dbReference>
<evidence type="ECO:0000250" key="1"/>
<evidence type="ECO:0000250" key="2">
    <source>
        <dbReference type="UniProtKB" id="Q91Z49"/>
    </source>
</evidence>
<evidence type="ECO:0000250" key="3">
    <source>
        <dbReference type="UniProtKB" id="Q96QD9"/>
    </source>
</evidence>
<evidence type="ECO:0000256" key="4">
    <source>
        <dbReference type="SAM" id="MobiDB-lite"/>
    </source>
</evidence>
<evidence type="ECO:0000305" key="5"/>